<gene>
    <name evidence="9" type="primary">TPS1</name>
</gene>
<keyword id="KW-0150">Chloroplast</keyword>
<keyword id="KW-0456">Lyase</keyword>
<keyword id="KW-0460">Magnesium</keyword>
<keyword id="KW-0464">Manganese</keyword>
<keyword id="KW-0479">Metal-binding</keyword>
<keyword id="KW-0934">Plastid</keyword>
<keyword id="KW-0809">Transit peptide</keyword>
<feature type="transit peptide" description="Chloroplast" evidence="5">
    <location>
        <begin position="1"/>
        <end position="35"/>
    </location>
</feature>
<feature type="chain" id="PRO_0000453315" description="Beta-phellandrene synthase">
    <location>
        <begin position="36"/>
        <end position="601"/>
    </location>
</feature>
<feature type="region of interest" description="Homodimerization" evidence="1">
    <location>
        <begin position="362"/>
        <end position="368"/>
    </location>
</feature>
<feature type="region of interest" description="Homodimerization" evidence="1">
    <location>
        <begin position="434"/>
        <end position="471"/>
    </location>
</feature>
<feature type="short sequence motif" description="DDXXD motif" evidence="4">
    <location>
        <begin position="356"/>
        <end position="360"/>
    </location>
</feature>
<feature type="binding site" evidence="2">
    <location>
        <position position="356"/>
    </location>
    <ligand>
        <name>Mn(2+)</name>
        <dbReference type="ChEBI" id="CHEBI:29035"/>
        <label>1</label>
    </ligand>
</feature>
<feature type="binding site" evidence="2">
    <location>
        <position position="356"/>
    </location>
    <ligand>
        <name>Mn(2+)</name>
        <dbReference type="ChEBI" id="CHEBI:29035"/>
        <label>2</label>
    </ligand>
</feature>
<feature type="binding site" evidence="2">
    <location>
        <position position="360"/>
    </location>
    <ligand>
        <name>Mn(2+)</name>
        <dbReference type="ChEBI" id="CHEBI:29035"/>
        <label>1</label>
    </ligand>
</feature>
<feature type="binding site" evidence="2">
    <location>
        <position position="360"/>
    </location>
    <ligand>
        <name>Mn(2+)</name>
        <dbReference type="ChEBI" id="CHEBI:29035"/>
        <label>2</label>
    </ligand>
</feature>
<feature type="binding site" evidence="2">
    <location>
        <position position="499"/>
    </location>
    <ligand>
        <name>Mn(2+)</name>
        <dbReference type="ChEBI" id="CHEBI:29035"/>
        <label>3</label>
    </ligand>
</feature>
<feature type="binding site" evidence="2">
    <location>
        <position position="507"/>
    </location>
    <ligand>
        <name>Mn(2+)</name>
        <dbReference type="ChEBI" id="CHEBI:29035"/>
        <label>3</label>
    </ligand>
</feature>
<sequence>MSTISIHHVGILRNPLPSKNKRALINNPWSLSLPRSSSASRLVKPCRISSKTDTNPAEITRRSANYEPSLWDFDYIQSLNGHQHYKKEKQLKREEELIVQVKMLLGTKMEAVKQLELIDDLKNLGLSYFFRDEIKKILTSIYNNSFENNNQVGDLYFTALGFRLLRQHGFNVSQRIFDCFKNEKGSHFDETLIGEDIKATLQLYETSFHLREGENTLELARQISTKYLQKMVDEGRINDENLSSWIRHSLDLPLHWRIQRLEARWSLDAYAAREDKNPLIFELAKLDFNIIQATQQEELKEVSRWWNDSCLAEKLPFVRDRVVECYFWAVGLFDCHDYGFQRKITAAVNILITAIDDVYDVYGTLDELQLFTDVIRRWDTQSIDQLPYYMQLCYLMLYNFVSSLGYDILKDRGINTILHLHQSWVSVVEAYLKEAEWYESGYAPSLEEYLSIATISIGLIPIVIPLDLSIPNSTIHRHTRIDHRHEILNLSGMVLRLADDLGTASSELERGDVPKAIQCYMKDTNASEEEAREHVRFLIGEAWKELNTAMAEPDDHPFTEQGAGAAANIGRAAQFIYLEGDGHAHFQNHQHLENLFFHPYV</sequence>
<organism>
    <name type="scientific">Origanum vulgare</name>
    <name type="common">Wild marjoram</name>
    <dbReference type="NCBI Taxonomy" id="39352"/>
    <lineage>
        <taxon>Eukaryota</taxon>
        <taxon>Viridiplantae</taxon>
        <taxon>Streptophyta</taxon>
        <taxon>Embryophyta</taxon>
        <taxon>Tracheophyta</taxon>
        <taxon>Spermatophyta</taxon>
        <taxon>Magnoliopsida</taxon>
        <taxon>eudicotyledons</taxon>
        <taxon>Gunneridae</taxon>
        <taxon>Pentapetalae</taxon>
        <taxon>asterids</taxon>
        <taxon>lamiids</taxon>
        <taxon>Lamiales</taxon>
        <taxon>Lamiaceae</taxon>
        <taxon>Nepetoideae</taxon>
        <taxon>Mentheae</taxon>
        <taxon>Origanum</taxon>
    </lineage>
</organism>
<reference key="1">
    <citation type="journal article" date="2010" name="Plant Mol. Biol.">
        <title>Terpene synthases of oregano (Origanum vulgare L.) and their roles in the pathway and regulation of terpene biosynthesis.</title>
        <authorList>
            <person name="Crocoll C."/>
            <person name="Asbach J."/>
            <person name="Novak J."/>
            <person name="Gershenzon J."/>
            <person name="Degenhardt J."/>
        </authorList>
    </citation>
    <scope>NUCLEOTIDE SEQUENCE [MRNA]</scope>
    <scope>FUNCTION</scope>
    <scope>CATALYTIC ACTIVITY</scope>
    <scope>PATHWAY</scope>
    <scope>TISSUE SPECIFICITY</scope>
    <source>
        <strain>cv. d06-01</strain>
        <tissue>Trichome gland</tissue>
    </source>
</reference>
<reference key="2">
    <citation type="thesis" date="2011" institute="Friedrich Schiller University of Jena" country="Germany">
        <title>Biosynthesis of the phenolic monoterpenes, thymol and carvacrol, by terpene synthases and cytochrome P450s in oregano and thyme.</title>
        <authorList>
            <person name="Crocoll C."/>
        </authorList>
    </citation>
    <scope>FUNCTION</scope>
    <scope>CATALYTIC ACTIVITY</scope>
    <scope>PATHWAY</scope>
</reference>
<reference key="3">
    <citation type="journal article" date="2018" name="Ind. Crops Prod.">
        <title>Divergence in tissue-specific expression patterns of genes associated with the terpenoid biosynthesis in two oregano species Origanum vulgare L., and Origanum majorana.</title>
        <authorList>
            <person name="Jan S."/>
            <person name="Mir J.I."/>
            <person name="Shafi W."/>
            <person name="Faktoo S.Z."/>
            <person name="Singh D.B."/>
            <person name="Wijaya L."/>
            <person name="Alyemeni M.N."/>
            <person name="Ahmad P."/>
        </authorList>
    </citation>
    <scope>TISSUE SPECIFICITY</scope>
</reference>
<dbReference type="EC" id="4.2.3.-" evidence="6 7"/>
<dbReference type="EC" id="4.2.3.110" evidence="6 7"/>
<dbReference type="EMBL" id="GU385980">
    <property type="protein sequence ID" value="ADK73623.1"/>
    <property type="molecule type" value="mRNA"/>
</dbReference>
<dbReference type="SMR" id="E2E2P2"/>
<dbReference type="UniPathway" id="UPA00213"/>
<dbReference type="GO" id="GO:0009507">
    <property type="term" value="C:chloroplast"/>
    <property type="evidence" value="ECO:0007669"/>
    <property type="project" value="UniProtKB-SubCell"/>
</dbReference>
<dbReference type="GO" id="GO:0000287">
    <property type="term" value="F:magnesium ion binding"/>
    <property type="evidence" value="ECO:0007669"/>
    <property type="project" value="InterPro"/>
</dbReference>
<dbReference type="GO" id="GO:0042803">
    <property type="term" value="F:protein homodimerization activity"/>
    <property type="evidence" value="ECO:0000250"/>
    <property type="project" value="UniProtKB"/>
</dbReference>
<dbReference type="GO" id="GO:0010333">
    <property type="term" value="F:terpene synthase activity"/>
    <property type="evidence" value="ECO:0007669"/>
    <property type="project" value="InterPro"/>
</dbReference>
<dbReference type="GO" id="GO:0016102">
    <property type="term" value="P:diterpenoid biosynthetic process"/>
    <property type="evidence" value="ECO:0007669"/>
    <property type="project" value="InterPro"/>
</dbReference>
<dbReference type="CDD" id="cd00684">
    <property type="entry name" value="Terpene_cyclase_plant_C1"/>
    <property type="match status" value="1"/>
</dbReference>
<dbReference type="FunFam" id="1.10.600.10:FF:000007">
    <property type="entry name" value="Isoprene synthase, chloroplastic"/>
    <property type="match status" value="1"/>
</dbReference>
<dbReference type="FunFam" id="1.50.10.130:FF:000001">
    <property type="entry name" value="Isoprene synthase, chloroplastic"/>
    <property type="match status" value="1"/>
</dbReference>
<dbReference type="Gene3D" id="1.10.600.10">
    <property type="entry name" value="Farnesyl Diphosphate Synthase"/>
    <property type="match status" value="1"/>
</dbReference>
<dbReference type="Gene3D" id="1.50.10.130">
    <property type="entry name" value="Terpene synthase, N-terminal domain"/>
    <property type="match status" value="1"/>
</dbReference>
<dbReference type="InterPro" id="IPR008949">
    <property type="entry name" value="Isoprenoid_synthase_dom_sf"/>
</dbReference>
<dbReference type="InterPro" id="IPR034741">
    <property type="entry name" value="Terpene_cyclase-like_1_C"/>
</dbReference>
<dbReference type="InterPro" id="IPR044814">
    <property type="entry name" value="Terpene_cyclase_plant_C1"/>
</dbReference>
<dbReference type="InterPro" id="IPR001906">
    <property type="entry name" value="Terpene_synth_N"/>
</dbReference>
<dbReference type="InterPro" id="IPR036965">
    <property type="entry name" value="Terpene_synth_N_sf"/>
</dbReference>
<dbReference type="InterPro" id="IPR050148">
    <property type="entry name" value="Terpene_synthase-like"/>
</dbReference>
<dbReference type="InterPro" id="IPR005630">
    <property type="entry name" value="Terpene_synthase_metal-bd"/>
</dbReference>
<dbReference type="InterPro" id="IPR008930">
    <property type="entry name" value="Terpenoid_cyclase/PrenylTrfase"/>
</dbReference>
<dbReference type="PANTHER" id="PTHR31225">
    <property type="entry name" value="OS04G0344100 PROTEIN-RELATED"/>
    <property type="match status" value="1"/>
</dbReference>
<dbReference type="PANTHER" id="PTHR31225:SF9">
    <property type="entry name" value="TERPENE SYNTHASE 10"/>
    <property type="match status" value="1"/>
</dbReference>
<dbReference type="Pfam" id="PF01397">
    <property type="entry name" value="Terpene_synth"/>
    <property type="match status" value="1"/>
</dbReference>
<dbReference type="Pfam" id="PF03936">
    <property type="entry name" value="Terpene_synth_C"/>
    <property type="match status" value="1"/>
</dbReference>
<dbReference type="SFLD" id="SFLDS00005">
    <property type="entry name" value="Isoprenoid_Synthase_Type_I"/>
    <property type="match status" value="1"/>
</dbReference>
<dbReference type="SFLD" id="SFLDG01019">
    <property type="entry name" value="Terpene_Cyclase_Like_1_C_Termi"/>
    <property type="match status" value="1"/>
</dbReference>
<dbReference type="SUPFAM" id="SSF48239">
    <property type="entry name" value="Terpenoid cyclases/Protein prenyltransferases"/>
    <property type="match status" value="1"/>
</dbReference>
<dbReference type="SUPFAM" id="SSF48576">
    <property type="entry name" value="Terpenoid synthases"/>
    <property type="match status" value="1"/>
</dbReference>
<proteinExistence type="evidence at protein level"/>
<comment type="function">
    <text evidence="6 7">Involved in the biosynthesis of phenolic monoterpenes natural products (PubMed:20419468, Ref.2). Monoterpene synthase that catalyzes mainly the formation of olefins such as sabinene and beta-phellandrene, and minor amounts of other monoterpenes (e.g. myrcene, gamma-terpinene, alpha-thujene and alpha-pinene) from geranyl diphosphate (GPP) (PubMed:20419468, Ref.2).</text>
</comment>
<comment type="catalytic activity">
    <reaction evidence="6 7">
        <text>(2E)-geranyl diphosphate = beta-phellandrene + diphosphate</text>
        <dbReference type="Rhea" id="RHEA:25504"/>
        <dbReference type="ChEBI" id="CHEBI:33019"/>
        <dbReference type="ChEBI" id="CHEBI:48741"/>
        <dbReference type="ChEBI" id="CHEBI:58057"/>
    </reaction>
    <physiologicalReaction direction="left-to-right" evidence="6 7">
        <dbReference type="Rhea" id="RHEA:25505"/>
    </physiologicalReaction>
</comment>
<comment type="catalytic activity">
    <reaction evidence="6 7">
        <text>(2E)-geranyl diphosphate = (1R,5R)-sabinene + diphosphate</text>
        <dbReference type="Rhea" id="RHEA:32547"/>
        <dbReference type="ChEBI" id="CHEBI:33019"/>
        <dbReference type="ChEBI" id="CHEBI:50029"/>
        <dbReference type="ChEBI" id="CHEBI:58057"/>
        <dbReference type="EC" id="4.2.3.110"/>
    </reaction>
    <physiologicalReaction direction="left-to-right" evidence="6 7">
        <dbReference type="Rhea" id="RHEA:32548"/>
    </physiologicalReaction>
</comment>
<comment type="cofactor">
    <cofactor evidence="3">
        <name>Mn(2+)</name>
        <dbReference type="ChEBI" id="CHEBI:29035"/>
    </cofactor>
    <cofactor evidence="3">
        <name>Mg(2+)</name>
        <dbReference type="ChEBI" id="CHEBI:18420"/>
    </cofactor>
    <text evidence="3">Binds 3 Mg(2+) or Mn(2+) ions per subunit.</text>
</comment>
<comment type="pathway">
    <text evidence="6 7">Secondary metabolite biosynthesis; terpenoid biosynthesis.</text>
</comment>
<comment type="subunit">
    <text evidence="1">Homodimer.</text>
</comment>
<comment type="subcellular location">
    <subcellularLocation>
        <location evidence="5">Plastid</location>
        <location evidence="5">Chloroplast</location>
    </subcellularLocation>
</comment>
<comment type="tissue specificity">
    <text evidence="6 8">Expressed in peltate glandular trichomes (PubMed:20419468). Present at low levels in flowers and stems (Ref.3).</text>
</comment>
<comment type="domain">
    <text evidence="4">The Asp-Asp-Xaa-Xaa-Asp/Glu (DDXXD/E) motif is important for the catalytic activity, presumably through binding to Mg(2+).</text>
</comment>
<comment type="similarity">
    <text evidence="10">Belongs to the terpene synthase family.</text>
</comment>
<accession>E2E2P2</accession>
<name>TPS1D_ORIVU</name>
<protein>
    <recommendedName>
        <fullName evidence="9">Beta-phellandrene synthase</fullName>
        <ecNumber evidence="6 7">4.2.3.-</ecNumber>
    </recommendedName>
    <alternativeName>
        <fullName evidence="9">Sabinene synthase</fullName>
        <ecNumber evidence="6 7">4.2.3.110</ecNumber>
    </alternativeName>
    <alternativeName>
        <fullName evidence="9">Terpene synthase 1, chloroplastic</fullName>
        <shortName evidence="9">OvTPS1</shortName>
    </alternativeName>
</protein>
<evidence type="ECO:0000250" key="1">
    <source>
        <dbReference type="UniProtKB" id="A0A0M3Q1Q3"/>
    </source>
</evidence>
<evidence type="ECO:0000250" key="2">
    <source>
        <dbReference type="UniProtKB" id="A0A1C9J6A7"/>
    </source>
</evidence>
<evidence type="ECO:0000250" key="3">
    <source>
        <dbReference type="UniProtKB" id="E2E2P0"/>
    </source>
</evidence>
<evidence type="ECO:0000250" key="4">
    <source>
        <dbReference type="UniProtKB" id="Q9X839"/>
    </source>
</evidence>
<evidence type="ECO:0000255" key="5"/>
<evidence type="ECO:0000269" key="6">
    <source>
    </source>
</evidence>
<evidence type="ECO:0000269" key="7">
    <source ref="2"/>
</evidence>
<evidence type="ECO:0000269" key="8">
    <source ref="3"/>
</evidence>
<evidence type="ECO:0000303" key="9">
    <source>
    </source>
</evidence>
<evidence type="ECO:0000305" key="10"/>